<feature type="chain" id="PRO_0000047577" description="Zinc finger protein 429">
    <location>
        <begin position="1"/>
        <end position="674"/>
    </location>
</feature>
<feature type="domain" description="KRAB" evidence="3">
    <location>
        <begin position="4"/>
        <end position="75"/>
    </location>
</feature>
<feature type="zinc finger region" description="C2H2-type 1; degenerate" evidence="2">
    <location>
        <begin position="145"/>
        <end position="167"/>
    </location>
</feature>
<feature type="zinc finger region" description="C2H2-type 2" evidence="2">
    <location>
        <begin position="173"/>
        <end position="195"/>
    </location>
</feature>
<feature type="zinc finger region" description="C2H2-type 3; degenerate" evidence="2">
    <location>
        <begin position="201"/>
        <end position="223"/>
    </location>
</feature>
<feature type="zinc finger region" description="C2H2-type 4" evidence="2">
    <location>
        <begin position="229"/>
        <end position="251"/>
    </location>
</feature>
<feature type="zinc finger region" description="C2H2-type 5" evidence="2">
    <location>
        <begin position="257"/>
        <end position="279"/>
    </location>
</feature>
<feature type="zinc finger region" description="C2H2-type 6" evidence="2">
    <location>
        <begin position="285"/>
        <end position="307"/>
    </location>
</feature>
<feature type="zinc finger region" description="C2H2-type 7" evidence="2">
    <location>
        <begin position="313"/>
        <end position="335"/>
    </location>
</feature>
<feature type="zinc finger region" description="C2H2-type 8" evidence="2">
    <location>
        <begin position="341"/>
        <end position="363"/>
    </location>
</feature>
<feature type="zinc finger region" description="C2H2-type 9" evidence="2">
    <location>
        <begin position="369"/>
        <end position="391"/>
    </location>
</feature>
<feature type="zinc finger region" description="C2H2-type 10; degenerate" evidence="2">
    <location>
        <begin position="397"/>
        <end position="419"/>
    </location>
</feature>
<feature type="zinc finger region" description="C2H2-type 11" evidence="2">
    <location>
        <begin position="425"/>
        <end position="447"/>
    </location>
</feature>
<feature type="zinc finger region" description="C2H2-type 12" evidence="2">
    <location>
        <begin position="453"/>
        <end position="475"/>
    </location>
</feature>
<feature type="zinc finger region" description="C2H2-type 13" evidence="2">
    <location>
        <begin position="481"/>
        <end position="503"/>
    </location>
</feature>
<feature type="zinc finger region" description="C2H2-type 14" evidence="2">
    <location>
        <begin position="509"/>
        <end position="531"/>
    </location>
</feature>
<feature type="zinc finger region" description="C2H2-type 15" evidence="2">
    <location>
        <begin position="537"/>
        <end position="559"/>
    </location>
</feature>
<feature type="zinc finger region" description="C2H2-type 16" evidence="2">
    <location>
        <begin position="565"/>
        <end position="587"/>
    </location>
</feature>
<feature type="zinc finger region" description="C2H2-type 17" evidence="2">
    <location>
        <begin position="593"/>
        <end position="615"/>
    </location>
</feature>
<feature type="zinc finger region" description="C2H2-type 18" evidence="2">
    <location>
        <begin position="621"/>
        <end position="643"/>
    </location>
</feature>
<feature type="region of interest" description="Disordered" evidence="4">
    <location>
        <begin position="653"/>
        <end position="674"/>
    </location>
</feature>
<feature type="modified residue" description="Phosphoserine" evidence="1">
    <location>
        <position position="605"/>
    </location>
</feature>
<feature type="sequence variant" id="VAR_047848" description="In dbSNP:rs2562473.">
    <original>H</original>
    <variation>Y</variation>
    <location>
        <position position="650"/>
    </location>
</feature>
<feature type="sequence conflict" description="In Ref. 2; AAP30884 and 3; AAK01422." evidence="5" ref="2 3">
    <original>H</original>
    <variation>Y</variation>
    <location>
        <position position="167"/>
    </location>
</feature>
<feature type="sequence conflict" description="In Ref. 2; AAP30884 and 3; AAK01422." evidence="5" ref="2 3">
    <original>FG</original>
    <variation>CC</variation>
    <location>
        <begin position="206"/>
        <end position="207"/>
    </location>
</feature>
<feature type="sequence conflict" description="In Ref. 2; AAP30884 and 3; AAK01422." evidence="5" ref="2 3">
    <location>
        <begin position="249"/>
        <end position="276"/>
    </location>
</feature>
<feature type="sequence conflict" description="In Ref. 2; AAP30884 and 3; AAK01422." evidence="5" ref="2 3">
    <original>T</original>
    <variation>S</variation>
    <location>
        <position position="252"/>
    </location>
</feature>
<feature type="sequence conflict" description="In Ref. 2; AAP30884 and 3; AAK01422." evidence="5" ref="2 3">
    <original>G</original>
    <variation>V</variation>
    <location>
        <position position="337"/>
    </location>
</feature>
<feature type="sequence conflict" description="In Ref. 2; AAP30884 and 3; AAK01422." evidence="5" ref="2 3">
    <original>V</original>
    <variation>I</variation>
    <location>
        <position position="361"/>
    </location>
</feature>
<feature type="sequence conflict" description="In Ref. 3; AAK01422." evidence="5" ref="3">
    <original>K</original>
    <variation>N</variation>
    <location>
        <position position="367"/>
    </location>
</feature>
<dbReference type="EMBL" id="AC010615">
    <property type="status" value="NOT_ANNOTATED_CDS"/>
    <property type="molecule type" value="Genomic_DNA"/>
</dbReference>
<dbReference type="EMBL" id="AY269786">
    <property type="protein sequence ID" value="AAP30884.1"/>
    <property type="status" value="ALT_SEQ"/>
    <property type="molecule type" value="mRNA"/>
</dbReference>
<dbReference type="EMBL" id="AF325191">
    <property type="protein sequence ID" value="AAK01422.1"/>
    <property type="status" value="ALT_SEQ"/>
    <property type="molecule type" value="mRNA"/>
</dbReference>
<dbReference type="EMBL" id="BM996292">
    <property type="status" value="NOT_ANNOTATED_CDS"/>
    <property type="molecule type" value="mRNA"/>
</dbReference>
<dbReference type="CCDS" id="CCDS42537.1"/>
<dbReference type="RefSeq" id="NP_001001415.2">
    <property type="nucleotide sequence ID" value="NM_001001415.4"/>
</dbReference>
<dbReference type="SMR" id="Q86V71"/>
<dbReference type="STRING" id="9606.ENSP00000351280"/>
<dbReference type="iPTMnet" id="Q86V71"/>
<dbReference type="PhosphoSitePlus" id="Q86V71"/>
<dbReference type="BioMuta" id="ZNF429"/>
<dbReference type="DMDM" id="218511972"/>
<dbReference type="jPOST" id="Q86V71"/>
<dbReference type="MassIVE" id="Q86V71"/>
<dbReference type="PaxDb" id="9606-ENSP00000351280"/>
<dbReference type="PeptideAtlas" id="Q86V71"/>
<dbReference type="Antibodypedia" id="44155">
    <property type="antibodies" value="69 antibodies from 12 providers"/>
</dbReference>
<dbReference type="DNASU" id="353088"/>
<dbReference type="Ensembl" id="ENST00000358491.9">
    <property type="protein sequence ID" value="ENSP00000351280.3"/>
    <property type="gene ID" value="ENSG00000197013.11"/>
</dbReference>
<dbReference type="GeneID" id="353088"/>
<dbReference type="KEGG" id="hsa:353088"/>
<dbReference type="MANE-Select" id="ENST00000358491.9">
    <property type="protein sequence ID" value="ENSP00000351280.3"/>
    <property type="RefSeq nucleotide sequence ID" value="NM_001001415.4"/>
    <property type="RefSeq protein sequence ID" value="NP_001001415.2"/>
</dbReference>
<dbReference type="UCSC" id="uc002nqd.2">
    <property type="organism name" value="human"/>
</dbReference>
<dbReference type="AGR" id="HGNC:20817"/>
<dbReference type="CTD" id="353088"/>
<dbReference type="DisGeNET" id="353088"/>
<dbReference type="GeneCards" id="ZNF429"/>
<dbReference type="HGNC" id="HGNC:20817">
    <property type="gene designation" value="ZNF429"/>
</dbReference>
<dbReference type="HPA" id="ENSG00000197013">
    <property type="expression patterns" value="Low tissue specificity"/>
</dbReference>
<dbReference type="neXtProt" id="NX_Q86V71"/>
<dbReference type="OpenTargets" id="ENSG00000197013"/>
<dbReference type="PharmGKB" id="PA134910790"/>
<dbReference type="VEuPathDB" id="HostDB:ENSG00000197013"/>
<dbReference type="eggNOG" id="KOG1721">
    <property type="taxonomic scope" value="Eukaryota"/>
</dbReference>
<dbReference type="GeneTree" id="ENSGT00940000153165"/>
<dbReference type="HOGENOM" id="CLU_002678_44_5_1"/>
<dbReference type="InParanoid" id="Q86V71"/>
<dbReference type="OMA" id="YRCKESG"/>
<dbReference type="OrthoDB" id="9411774at2759"/>
<dbReference type="PAN-GO" id="Q86V71">
    <property type="GO annotations" value="4 GO annotations based on evolutionary models"/>
</dbReference>
<dbReference type="PhylomeDB" id="Q86V71"/>
<dbReference type="TreeFam" id="TF342117"/>
<dbReference type="PathwayCommons" id="Q86V71"/>
<dbReference type="Reactome" id="R-HSA-212436">
    <property type="pathway name" value="Generic Transcription Pathway"/>
</dbReference>
<dbReference type="BioGRID-ORCS" id="353088">
    <property type="hits" value="39 hits in 1105 CRISPR screens"/>
</dbReference>
<dbReference type="ChiTaRS" id="ZNF429">
    <property type="organism name" value="human"/>
</dbReference>
<dbReference type="GenomeRNAi" id="353088"/>
<dbReference type="Pharos" id="Q86V71">
    <property type="development level" value="Tdark"/>
</dbReference>
<dbReference type="PRO" id="PR:Q86V71"/>
<dbReference type="Proteomes" id="UP000005640">
    <property type="component" value="Chromosome 19"/>
</dbReference>
<dbReference type="RNAct" id="Q86V71">
    <property type="molecule type" value="protein"/>
</dbReference>
<dbReference type="Bgee" id="ENSG00000197013">
    <property type="expression patterns" value="Expressed in C1 segment of cervical spinal cord and 128 other cell types or tissues"/>
</dbReference>
<dbReference type="ExpressionAtlas" id="Q86V71">
    <property type="expression patterns" value="baseline and differential"/>
</dbReference>
<dbReference type="GO" id="GO:0005634">
    <property type="term" value="C:nucleus"/>
    <property type="evidence" value="ECO:0000318"/>
    <property type="project" value="GO_Central"/>
</dbReference>
<dbReference type="GO" id="GO:0000981">
    <property type="term" value="F:DNA-binding transcription factor activity, RNA polymerase II-specific"/>
    <property type="evidence" value="ECO:0000318"/>
    <property type="project" value="GO_Central"/>
</dbReference>
<dbReference type="GO" id="GO:0000978">
    <property type="term" value="F:RNA polymerase II cis-regulatory region sequence-specific DNA binding"/>
    <property type="evidence" value="ECO:0000318"/>
    <property type="project" value="GO_Central"/>
</dbReference>
<dbReference type="GO" id="GO:0008270">
    <property type="term" value="F:zinc ion binding"/>
    <property type="evidence" value="ECO:0007669"/>
    <property type="project" value="UniProtKB-KW"/>
</dbReference>
<dbReference type="GO" id="GO:0006357">
    <property type="term" value="P:regulation of transcription by RNA polymerase II"/>
    <property type="evidence" value="ECO:0000318"/>
    <property type="project" value="GO_Central"/>
</dbReference>
<dbReference type="CDD" id="cd07765">
    <property type="entry name" value="KRAB_A-box"/>
    <property type="match status" value="1"/>
</dbReference>
<dbReference type="FunFam" id="3.30.160.60:FF:000424">
    <property type="entry name" value="Zinc finger protein 140"/>
    <property type="match status" value="1"/>
</dbReference>
<dbReference type="FunFam" id="3.30.160.60:FF:000374">
    <property type="entry name" value="Zinc finger protein 208"/>
    <property type="match status" value="1"/>
</dbReference>
<dbReference type="FunFam" id="3.30.160.60:FF:001868">
    <property type="entry name" value="Zinc finger protein 264"/>
    <property type="match status" value="5"/>
</dbReference>
<dbReference type="FunFam" id="3.30.160.60:FF:000016">
    <property type="entry name" value="zinc finger protein 37 homolog"/>
    <property type="match status" value="1"/>
</dbReference>
<dbReference type="FunFam" id="3.30.160.60:FF:000120">
    <property type="entry name" value="Zinc finger protein 430"/>
    <property type="match status" value="1"/>
</dbReference>
<dbReference type="FunFam" id="3.30.160.60:FF:002448">
    <property type="entry name" value="Zinc finger protein 430"/>
    <property type="match status" value="1"/>
</dbReference>
<dbReference type="FunFam" id="3.30.160.60:FF:002254">
    <property type="entry name" value="Zinc finger protein 540"/>
    <property type="match status" value="3"/>
</dbReference>
<dbReference type="FunFam" id="3.30.160.60:FF:000362">
    <property type="entry name" value="Zinc finger protein 606"/>
    <property type="match status" value="1"/>
</dbReference>
<dbReference type="FunFam" id="3.30.160.60:FF:000307">
    <property type="entry name" value="Zinc finger protein ZFP69 isoform 1"/>
    <property type="match status" value="1"/>
</dbReference>
<dbReference type="FunFam" id="3.30.160.60:FF:002884">
    <property type="entry name" value="ZNF429 isoform 4"/>
    <property type="match status" value="1"/>
</dbReference>
<dbReference type="Gene3D" id="6.10.140.140">
    <property type="match status" value="1"/>
</dbReference>
<dbReference type="Gene3D" id="3.30.160.60">
    <property type="entry name" value="Classic Zinc Finger"/>
    <property type="match status" value="17"/>
</dbReference>
<dbReference type="InterPro" id="IPR001909">
    <property type="entry name" value="KRAB"/>
</dbReference>
<dbReference type="InterPro" id="IPR036051">
    <property type="entry name" value="KRAB_dom_sf"/>
</dbReference>
<dbReference type="InterPro" id="IPR050758">
    <property type="entry name" value="Znf_C2H2-type"/>
</dbReference>
<dbReference type="InterPro" id="IPR036236">
    <property type="entry name" value="Znf_C2H2_sf"/>
</dbReference>
<dbReference type="InterPro" id="IPR013087">
    <property type="entry name" value="Znf_C2H2_type"/>
</dbReference>
<dbReference type="PANTHER" id="PTHR23234:SF8">
    <property type="entry name" value="C2H2-TYPE DOMAIN-CONTAINING PROTEIN"/>
    <property type="match status" value="1"/>
</dbReference>
<dbReference type="PANTHER" id="PTHR23234">
    <property type="entry name" value="ZNF44 PROTEIN"/>
    <property type="match status" value="1"/>
</dbReference>
<dbReference type="Pfam" id="PF01352">
    <property type="entry name" value="KRAB"/>
    <property type="match status" value="1"/>
</dbReference>
<dbReference type="Pfam" id="PF00096">
    <property type="entry name" value="zf-C2H2"/>
    <property type="match status" value="15"/>
</dbReference>
<dbReference type="SMART" id="SM00349">
    <property type="entry name" value="KRAB"/>
    <property type="match status" value="1"/>
</dbReference>
<dbReference type="SMART" id="SM00355">
    <property type="entry name" value="ZnF_C2H2"/>
    <property type="match status" value="15"/>
</dbReference>
<dbReference type="SUPFAM" id="SSF57667">
    <property type="entry name" value="beta-beta-alpha zinc fingers"/>
    <property type="match status" value="10"/>
</dbReference>
<dbReference type="SUPFAM" id="SSF109640">
    <property type="entry name" value="KRAB domain (Kruppel-associated box)"/>
    <property type="match status" value="1"/>
</dbReference>
<dbReference type="PROSITE" id="PS50805">
    <property type="entry name" value="KRAB"/>
    <property type="match status" value="1"/>
</dbReference>
<dbReference type="PROSITE" id="PS00028">
    <property type="entry name" value="ZINC_FINGER_C2H2_1"/>
    <property type="match status" value="15"/>
</dbReference>
<dbReference type="PROSITE" id="PS50157">
    <property type="entry name" value="ZINC_FINGER_C2H2_2"/>
    <property type="match status" value="17"/>
</dbReference>
<comment type="function">
    <text>May be involved in transcriptional regulation.</text>
</comment>
<comment type="subcellular location">
    <subcellularLocation>
        <location evidence="5">Nucleus</location>
    </subcellularLocation>
</comment>
<comment type="sequence caution" evidence="5">
    <conflict type="frameshift">
        <sequence resource="EMBL-CDS" id="AAK01422"/>
    </conflict>
</comment>
<comment type="sequence caution" evidence="5">
    <conflict type="miscellaneous discrepancy">
        <sequence resource="EMBL-CDS" id="AAK01422"/>
    </conflict>
</comment>
<comment type="sequence caution" evidence="5">
    <conflict type="frameshift">
        <sequence resource="EMBL-CDS" id="AAP30884"/>
    </conflict>
</comment>
<comment type="sequence caution" evidence="5">
    <conflict type="miscellaneous discrepancy">
        <sequence resource="EMBL-CDS" id="AAP30884"/>
    </conflict>
</comment>
<name>ZN429_HUMAN</name>
<protein>
    <recommendedName>
        <fullName>Zinc finger protein 429</fullName>
    </recommendedName>
</protein>
<keyword id="KW-0238">DNA-binding</keyword>
<keyword id="KW-0479">Metal-binding</keyword>
<keyword id="KW-0539">Nucleus</keyword>
<keyword id="KW-0597">Phosphoprotein</keyword>
<keyword id="KW-1185">Reference proteome</keyword>
<keyword id="KW-0677">Repeat</keyword>
<keyword id="KW-0804">Transcription</keyword>
<keyword id="KW-0805">Transcription regulation</keyword>
<keyword id="KW-0862">Zinc</keyword>
<keyword id="KW-0863">Zinc-finger</keyword>
<sequence length="674" mass="78152">MGPLTFTDVAIEFSLEEWQCLDTAQQNLYRNVMLENYRNLVFLGIAVSKPDLITCLEKEKEPCKMKRHEMVDEPPVVCSHFAEDFWPEQDIKDSFQKVTLRRYDKRGHENLQLRKGYKTVGDCKLYKGGYNGLNQCLTLTQSKMYHCDIYVKVFYAFSNADRYKTRHTGKKPFQCKKCGKSFCMLSQLTQHKKIHIRENTYRCKEFGNAFNQSSALTNHKRIYVGEKHYRCEECGKAFNHYSTLTNHKRIHTGEKPYKCKECGKAFSRYSTLTTHKRIHSGEKPYKCDECGKTFSISSTFTKHKIIHTEEKPYKCKECGKAFNRSSTLTSHKRIHTGEKPYKCEECGKAFNWSSTLTKHKVIHTGEKPYKCEECGKAFNQSSRLTRHKKIHTGEEPYKFEKCGRVFTCSSTLTQDKKIHTGEKPYNCEECGKVFTYSSTLTRHKRIHTEEKPYKCNECGKAFNRSSHLTSHRRIHTGEKPYKCEECGKAFKQSSNLNSHKKIHSGEKPYKCEECGKAFILSSRLTQHKKIHTGEKPYKCEECGKAFNRSSRLTQHKKIHTGEKPYKCKQCDKAFTHSSNLSSHKKIHSGEKPYKCEECGKAFNRSSRLTQHKKIHTREKPYKCEECAKAFTRSSRLTQHKKIHRMGVVAHACNPSTLGGRGGRITRSGDRDRPG</sequence>
<organism>
    <name type="scientific">Homo sapiens</name>
    <name type="common">Human</name>
    <dbReference type="NCBI Taxonomy" id="9606"/>
    <lineage>
        <taxon>Eukaryota</taxon>
        <taxon>Metazoa</taxon>
        <taxon>Chordata</taxon>
        <taxon>Craniata</taxon>
        <taxon>Vertebrata</taxon>
        <taxon>Euteleostomi</taxon>
        <taxon>Mammalia</taxon>
        <taxon>Eutheria</taxon>
        <taxon>Euarchontoglires</taxon>
        <taxon>Primates</taxon>
        <taxon>Haplorrhini</taxon>
        <taxon>Catarrhini</taxon>
        <taxon>Hominidae</taxon>
        <taxon>Homo</taxon>
    </lineage>
</organism>
<proteinExistence type="evidence at transcript level"/>
<gene>
    <name type="primary">ZNF429</name>
</gene>
<reference key="1">
    <citation type="journal article" date="2004" name="Nature">
        <title>The DNA sequence and biology of human chromosome 19.</title>
        <authorList>
            <person name="Grimwood J."/>
            <person name="Gordon L.A."/>
            <person name="Olsen A.S."/>
            <person name="Terry A."/>
            <person name="Schmutz J."/>
            <person name="Lamerdin J.E."/>
            <person name="Hellsten U."/>
            <person name="Goodstein D."/>
            <person name="Couronne O."/>
            <person name="Tran-Gyamfi M."/>
            <person name="Aerts A."/>
            <person name="Altherr M."/>
            <person name="Ashworth L."/>
            <person name="Bajorek E."/>
            <person name="Black S."/>
            <person name="Branscomb E."/>
            <person name="Caenepeel S."/>
            <person name="Carrano A.V."/>
            <person name="Caoile C."/>
            <person name="Chan Y.M."/>
            <person name="Christensen M."/>
            <person name="Cleland C.A."/>
            <person name="Copeland A."/>
            <person name="Dalin E."/>
            <person name="Dehal P."/>
            <person name="Denys M."/>
            <person name="Detter J.C."/>
            <person name="Escobar J."/>
            <person name="Flowers D."/>
            <person name="Fotopulos D."/>
            <person name="Garcia C."/>
            <person name="Georgescu A.M."/>
            <person name="Glavina T."/>
            <person name="Gomez M."/>
            <person name="Gonzales E."/>
            <person name="Groza M."/>
            <person name="Hammon N."/>
            <person name="Hawkins T."/>
            <person name="Haydu L."/>
            <person name="Ho I."/>
            <person name="Huang W."/>
            <person name="Israni S."/>
            <person name="Jett J."/>
            <person name="Kadner K."/>
            <person name="Kimball H."/>
            <person name="Kobayashi A."/>
            <person name="Larionov V."/>
            <person name="Leem S.-H."/>
            <person name="Lopez F."/>
            <person name="Lou Y."/>
            <person name="Lowry S."/>
            <person name="Malfatti S."/>
            <person name="Martinez D."/>
            <person name="McCready P.M."/>
            <person name="Medina C."/>
            <person name="Morgan J."/>
            <person name="Nelson K."/>
            <person name="Nolan M."/>
            <person name="Ovcharenko I."/>
            <person name="Pitluck S."/>
            <person name="Pollard M."/>
            <person name="Popkie A.P."/>
            <person name="Predki P."/>
            <person name="Quan G."/>
            <person name="Ramirez L."/>
            <person name="Rash S."/>
            <person name="Retterer J."/>
            <person name="Rodriguez A."/>
            <person name="Rogers S."/>
            <person name="Salamov A."/>
            <person name="Salazar A."/>
            <person name="She X."/>
            <person name="Smith D."/>
            <person name="Slezak T."/>
            <person name="Solovyev V."/>
            <person name="Thayer N."/>
            <person name="Tice H."/>
            <person name="Tsai M."/>
            <person name="Ustaszewska A."/>
            <person name="Vo N."/>
            <person name="Wagner M."/>
            <person name="Wheeler J."/>
            <person name="Wu K."/>
            <person name="Xie G."/>
            <person name="Yang J."/>
            <person name="Dubchak I."/>
            <person name="Furey T.S."/>
            <person name="DeJong P."/>
            <person name="Dickson M."/>
            <person name="Gordon D."/>
            <person name="Eichler E.E."/>
            <person name="Pennacchio L.A."/>
            <person name="Richardson P."/>
            <person name="Stubbs L."/>
            <person name="Rokhsar D.S."/>
            <person name="Myers R.M."/>
            <person name="Rubin E.M."/>
            <person name="Lucas S.M."/>
        </authorList>
    </citation>
    <scope>NUCLEOTIDE SEQUENCE [LARGE SCALE GENOMIC DNA]</scope>
</reference>
<reference key="2">
    <citation type="submission" date="2003-04" db="EMBL/GenBank/DDBJ databases">
        <title>Zinc finger protein weakly similar to zinc finger protein 85.</title>
        <authorList>
            <person name="Bi A."/>
        </authorList>
    </citation>
    <scope>NUCLEOTIDE SEQUENCE [MRNA] OF 1-623</scope>
</reference>
<reference key="3">
    <citation type="journal article" date="1995" name="DNA Cell Biol.">
        <title>Isolation of cDNA clones for 42 different Kruppel-related zinc finger proteins expressed in the human monoblast cell line U-937.</title>
        <authorList>
            <person name="Abrink M."/>
            <person name="Aveskogh M."/>
            <person name="Hellman L."/>
        </authorList>
    </citation>
    <scope>NUCLEOTIDE SEQUENCE [MRNA] OF 1-497</scope>
</reference>
<reference key="4">
    <citation type="submission" date="2002-06" db="EMBL/GenBank/DDBJ databases">
        <authorList>
            <consortium name="The Cancer Genome Anatomy Project (CGAP) at the National Cancer Institute"/>
        </authorList>
    </citation>
    <scope>NUCLEOTIDE SEQUENCE [LARGE SCALE MRNA] OF 545-674</scope>
    <source>
        <tissue>Chondrosarcoma</tissue>
    </source>
</reference>
<evidence type="ECO:0000250" key="1">
    <source>
        <dbReference type="UniProtKB" id="P17019"/>
    </source>
</evidence>
<evidence type="ECO:0000255" key="2">
    <source>
        <dbReference type="PROSITE-ProRule" id="PRU00042"/>
    </source>
</evidence>
<evidence type="ECO:0000255" key="3">
    <source>
        <dbReference type="PROSITE-ProRule" id="PRU00119"/>
    </source>
</evidence>
<evidence type="ECO:0000256" key="4">
    <source>
        <dbReference type="SAM" id="MobiDB-lite"/>
    </source>
</evidence>
<evidence type="ECO:0000305" key="5"/>
<accession>Q86V71</accession>
<accession>A6NLV7</accession>
<accession>Q9BZE6</accession>